<reference key="1">
    <citation type="journal article" date="2006" name="Nat. Biotechnol.">
        <title>Genome sequence of the ubiquitous hydrocarbon-degrading marine bacterium Alcanivorax borkumensis.</title>
        <authorList>
            <person name="Schneiker S."/>
            <person name="Martins dos Santos V.A.P."/>
            <person name="Bartels D."/>
            <person name="Bekel T."/>
            <person name="Brecht M."/>
            <person name="Buhrmester J."/>
            <person name="Chernikova T.N."/>
            <person name="Denaro R."/>
            <person name="Ferrer M."/>
            <person name="Gertler C."/>
            <person name="Goesmann A."/>
            <person name="Golyshina O.V."/>
            <person name="Kaminski F."/>
            <person name="Khachane A.N."/>
            <person name="Lang S."/>
            <person name="Linke B."/>
            <person name="McHardy A.C."/>
            <person name="Meyer F."/>
            <person name="Nechitaylo T."/>
            <person name="Puehler A."/>
            <person name="Regenhardt D."/>
            <person name="Rupp O."/>
            <person name="Sabirova J.S."/>
            <person name="Selbitschka W."/>
            <person name="Yakimov M.M."/>
            <person name="Timmis K.N."/>
            <person name="Vorhoelter F.-J."/>
            <person name="Weidner S."/>
            <person name="Kaiser O."/>
            <person name="Golyshin P.N."/>
        </authorList>
    </citation>
    <scope>NUCLEOTIDE SEQUENCE [LARGE SCALE GENOMIC DNA]</scope>
    <source>
        <strain>ATCC 700651 / DSM 11573 / NCIMB 13689 / SK2</strain>
    </source>
</reference>
<sequence length="197" mass="21493">MTDQTPTLLLASSSPFRRQLLDKLKLDFIHQSPDIDESRHEDESPTALVMRLAREKALALADQHPNTLIIGSDQVAVIGNQVLGKPGDRDTAIRQLSAASGKRVSFLTGLCLLNTATGRSQVVCDPFHVQFRTLKPAQIERYVDIEQPLNCAGSFKSEGLGIVLFKALEGRDPNTLVGLPLIILTEFLAAEGVQLPL</sequence>
<accession>Q0VQN6</accession>
<dbReference type="EC" id="3.6.1.-" evidence="1"/>
<dbReference type="EMBL" id="AM286690">
    <property type="protein sequence ID" value="CAL16512.1"/>
    <property type="molecule type" value="Genomic_DNA"/>
</dbReference>
<dbReference type="RefSeq" id="WP_011588348.1">
    <property type="nucleotide sequence ID" value="NC_008260.1"/>
</dbReference>
<dbReference type="SMR" id="Q0VQN6"/>
<dbReference type="STRING" id="393595.ABO_1064"/>
<dbReference type="KEGG" id="abo:ABO_1064"/>
<dbReference type="eggNOG" id="COG0424">
    <property type="taxonomic scope" value="Bacteria"/>
</dbReference>
<dbReference type="HOGENOM" id="CLU_040416_1_0_6"/>
<dbReference type="OrthoDB" id="9813694at2"/>
<dbReference type="Proteomes" id="UP000008871">
    <property type="component" value="Chromosome"/>
</dbReference>
<dbReference type="GO" id="GO:0005737">
    <property type="term" value="C:cytoplasm"/>
    <property type="evidence" value="ECO:0007669"/>
    <property type="project" value="UniProtKB-SubCell"/>
</dbReference>
<dbReference type="GO" id="GO:0047429">
    <property type="term" value="F:nucleoside triphosphate diphosphatase activity"/>
    <property type="evidence" value="ECO:0007669"/>
    <property type="project" value="InterPro"/>
</dbReference>
<dbReference type="GO" id="GO:0009117">
    <property type="term" value="P:nucleotide metabolic process"/>
    <property type="evidence" value="ECO:0007669"/>
    <property type="project" value="UniProtKB-KW"/>
</dbReference>
<dbReference type="CDD" id="cd00555">
    <property type="entry name" value="Maf"/>
    <property type="match status" value="1"/>
</dbReference>
<dbReference type="FunFam" id="3.90.950.10:FF:000005">
    <property type="entry name" value="7-methyl-GTP pyrophosphatase"/>
    <property type="match status" value="1"/>
</dbReference>
<dbReference type="Gene3D" id="3.90.950.10">
    <property type="match status" value="1"/>
</dbReference>
<dbReference type="HAMAP" id="MF_00528">
    <property type="entry name" value="Maf"/>
    <property type="match status" value="1"/>
</dbReference>
<dbReference type="InterPro" id="IPR029001">
    <property type="entry name" value="ITPase-like_fam"/>
</dbReference>
<dbReference type="InterPro" id="IPR003697">
    <property type="entry name" value="Maf-like"/>
</dbReference>
<dbReference type="NCBIfam" id="TIGR00172">
    <property type="entry name" value="maf"/>
    <property type="match status" value="1"/>
</dbReference>
<dbReference type="PANTHER" id="PTHR43213:SF10">
    <property type="entry name" value="7-METHYL-GTP PYROPHOSPHATASE"/>
    <property type="match status" value="1"/>
</dbReference>
<dbReference type="PANTHER" id="PTHR43213">
    <property type="entry name" value="BIFUNCTIONAL DTTP/UTP PYROPHOSPHATASE/METHYLTRANSFERASE PROTEIN-RELATED"/>
    <property type="match status" value="1"/>
</dbReference>
<dbReference type="Pfam" id="PF02545">
    <property type="entry name" value="Maf"/>
    <property type="match status" value="1"/>
</dbReference>
<dbReference type="PIRSF" id="PIRSF006305">
    <property type="entry name" value="Maf"/>
    <property type="match status" value="1"/>
</dbReference>
<dbReference type="SUPFAM" id="SSF52972">
    <property type="entry name" value="ITPase-like"/>
    <property type="match status" value="1"/>
</dbReference>
<comment type="function">
    <text evidence="1">Nucleoside triphosphate pyrophosphatase that hydrolyzes 7-methyl-GTP (m(7)GTP). May have a dual role in cell division arrest and in preventing the incorporation of modified nucleotides into cellular nucleic acids.</text>
</comment>
<comment type="catalytic activity">
    <reaction evidence="1">
        <text>N(7)-methyl-GTP + H2O = N(7)-methyl-GMP + diphosphate + H(+)</text>
        <dbReference type="Rhea" id="RHEA:58744"/>
        <dbReference type="ChEBI" id="CHEBI:15377"/>
        <dbReference type="ChEBI" id="CHEBI:15378"/>
        <dbReference type="ChEBI" id="CHEBI:33019"/>
        <dbReference type="ChEBI" id="CHEBI:58285"/>
        <dbReference type="ChEBI" id="CHEBI:87133"/>
    </reaction>
</comment>
<comment type="cofactor">
    <cofactor evidence="1">
        <name>a divalent metal cation</name>
        <dbReference type="ChEBI" id="CHEBI:60240"/>
    </cofactor>
</comment>
<comment type="subcellular location">
    <subcellularLocation>
        <location evidence="1">Cytoplasm</location>
    </subcellularLocation>
</comment>
<comment type="similarity">
    <text evidence="1">Belongs to the Maf family. YceF subfamily.</text>
</comment>
<protein>
    <recommendedName>
        <fullName evidence="1">7-methyl-GTP pyrophosphatase</fullName>
        <shortName evidence="1">m(7)GTP pyrophosphatase</shortName>
        <ecNumber evidence="1">3.6.1.-</ecNumber>
    </recommendedName>
</protein>
<keyword id="KW-0963">Cytoplasm</keyword>
<keyword id="KW-0378">Hydrolase</keyword>
<keyword id="KW-0546">Nucleotide metabolism</keyword>
<keyword id="KW-1185">Reference proteome</keyword>
<name>NTPPB_ALCBS</name>
<evidence type="ECO:0000255" key="1">
    <source>
        <dbReference type="HAMAP-Rule" id="MF_00528"/>
    </source>
</evidence>
<proteinExistence type="inferred from homology"/>
<feature type="chain" id="PRO_0000267239" description="7-methyl-GTP pyrophosphatase">
    <location>
        <begin position="1"/>
        <end position="197"/>
    </location>
</feature>
<feature type="active site" description="Proton acceptor" evidence="1">
    <location>
        <position position="73"/>
    </location>
</feature>
<feature type="site" description="Important for substrate specificity" evidence="1">
    <location>
        <position position="16"/>
    </location>
</feature>
<feature type="site" description="Important for substrate specificity" evidence="1">
    <location>
        <position position="74"/>
    </location>
</feature>
<feature type="site" description="Important for substrate specificity" evidence="1">
    <location>
        <position position="158"/>
    </location>
</feature>
<gene>
    <name type="ordered locus">ABO_1064</name>
</gene>
<organism>
    <name type="scientific">Alcanivorax borkumensis (strain ATCC 700651 / DSM 11573 / NCIMB 13689 / SK2)</name>
    <dbReference type="NCBI Taxonomy" id="393595"/>
    <lineage>
        <taxon>Bacteria</taxon>
        <taxon>Pseudomonadati</taxon>
        <taxon>Pseudomonadota</taxon>
        <taxon>Gammaproteobacteria</taxon>
        <taxon>Oceanospirillales</taxon>
        <taxon>Alcanivoracaceae</taxon>
        <taxon>Alcanivorax</taxon>
    </lineage>
</organism>